<gene>
    <name type="ORF">SPBP8B7.23</name>
</gene>
<sequence length="673" mass="76460">MLNGEKSALGEMPSNSNSSSKLNAKSPNFIPSSSNIPRSSAKTKEHSADRKPHRNSEKKTQGMPRKNQQLASSERKTKNKKRLEKQSSAIADSIGESLDDPQTVYDEHLFDILSARTNKRGQINLNHLLNFQFTPRTNSNAFSAPPRRSRGYNTYGQGSGHHPMDKSRYVNANYRFVVSPIGDYQSQKLDPDSPVKWEDVWQVLCSSDFQLAACPFCLEEKPVAARMSRCGHVYCFSCLLRFVETPTAAEVKAAETSGTKIVKCGHRSCPICWDSIRLRDVHPIRWVEDKEFQKLEEGKSVCLRLYQRNNGSILAFPRSCRSFALDGSFHSDEIPNFTMSGAAYARIIIGSHDYMVQQHLLEIEQLQQIAAEDISLYGSADTYYERITQILLDRISSLSESVNEQNIKSLQTDIDNLCLQSNSLKQLSEVDDLNDVSGSEIADAYLFYQPFAHSHIYLSPLDIRILKSAFGSYENFPDELVPRVERISSGHLVNSELRQRFKYMAHLPEGCEVAFIECDWSKIIPKEVLLTFKSEISKRRKQRKAQEMREERYRQRAERDTEEQIYSELNMQRPVPKTVVHEDPAEAFPTLGSHHQFESTDEVNTDESTLSTAKTVWGTRALANIQNDTDDQDDLDGWKVDWDKVAQLSAPSKNSKNKKKKKLVLLSTGAAHR</sequence>
<keyword id="KW-0963">Cytoplasm</keyword>
<keyword id="KW-0479">Metal-binding</keyword>
<keyword id="KW-0539">Nucleus</keyword>
<keyword id="KW-1185">Reference proteome</keyword>
<keyword id="KW-0862">Zinc</keyword>
<keyword id="KW-0863">Zinc-finger</keyword>
<organism>
    <name type="scientific">Schizosaccharomyces pombe (strain 972 / ATCC 24843)</name>
    <name type="common">Fission yeast</name>
    <dbReference type="NCBI Taxonomy" id="284812"/>
    <lineage>
        <taxon>Eukaryota</taxon>
        <taxon>Fungi</taxon>
        <taxon>Dikarya</taxon>
        <taxon>Ascomycota</taxon>
        <taxon>Taphrinomycotina</taxon>
        <taxon>Schizosaccharomycetes</taxon>
        <taxon>Schizosaccharomycetales</taxon>
        <taxon>Schizosaccharomycetaceae</taxon>
        <taxon>Schizosaccharomyces</taxon>
    </lineage>
</organism>
<accession>O94271</accession>
<accession>Q9UU59</accession>
<proteinExistence type="predicted"/>
<comment type="subcellular location">
    <subcellularLocation>
        <location>Cytoplasm</location>
    </subcellularLocation>
    <subcellularLocation>
        <location>Nucleus</location>
    </subcellularLocation>
</comment>
<protein>
    <recommendedName>
        <fullName>Uncharacterized RING finger protein P8B7.23</fullName>
    </recommendedName>
</protein>
<feature type="chain" id="PRO_0000310492" description="Uncharacterized RING finger protein P8B7.23">
    <location>
        <begin position="1"/>
        <end position="673"/>
    </location>
</feature>
<feature type="zinc finger region" description="RING-type" evidence="1">
    <location>
        <begin position="214"/>
        <end position="273"/>
    </location>
</feature>
<feature type="region of interest" description="Disordered" evidence="2">
    <location>
        <begin position="1"/>
        <end position="95"/>
    </location>
</feature>
<feature type="region of interest" description="Disordered" evidence="2">
    <location>
        <begin position="649"/>
        <end position="673"/>
    </location>
</feature>
<feature type="compositionally biased region" description="Low complexity" evidence="2">
    <location>
        <begin position="13"/>
        <end position="40"/>
    </location>
</feature>
<feature type="compositionally biased region" description="Basic and acidic residues" evidence="2">
    <location>
        <begin position="42"/>
        <end position="60"/>
    </location>
</feature>
<dbReference type="EMBL" id="CU329671">
    <property type="protein sequence ID" value="CAA21808.1"/>
    <property type="molecule type" value="Genomic_DNA"/>
</dbReference>
<dbReference type="EMBL" id="AB027798">
    <property type="protein sequence ID" value="BAA87102.1"/>
    <property type="molecule type" value="Genomic_DNA"/>
</dbReference>
<dbReference type="PIR" id="T40817">
    <property type="entry name" value="T40817"/>
</dbReference>
<dbReference type="BioGRID" id="277876">
    <property type="interactions" value="11"/>
</dbReference>
<dbReference type="FunCoup" id="O94271">
    <property type="interactions" value="315"/>
</dbReference>
<dbReference type="STRING" id="284812.O94271"/>
<dbReference type="iPTMnet" id="O94271"/>
<dbReference type="PaxDb" id="4896-SPBP8B7.23.1"/>
<dbReference type="EnsemblFungi" id="SPBP8B7.23.1">
    <property type="protein sequence ID" value="SPBP8B7.23.1:pep"/>
    <property type="gene ID" value="SPBP8B7.23"/>
</dbReference>
<dbReference type="KEGG" id="spo:2541365"/>
<dbReference type="PomBase" id="SPBP8B7.23"/>
<dbReference type="VEuPathDB" id="FungiDB:SPBP8B7.23"/>
<dbReference type="eggNOG" id="KOG2164">
    <property type="taxonomic scope" value="Eukaryota"/>
</dbReference>
<dbReference type="HOGENOM" id="CLU_011811_1_0_1"/>
<dbReference type="InParanoid" id="O94271"/>
<dbReference type="OMA" id="PRWKKCP"/>
<dbReference type="PhylomeDB" id="O94271"/>
<dbReference type="PRO" id="PR:O94271"/>
<dbReference type="Proteomes" id="UP000002485">
    <property type="component" value="Chromosome II"/>
</dbReference>
<dbReference type="GO" id="GO:0005737">
    <property type="term" value="C:cytoplasm"/>
    <property type="evidence" value="ECO:0007005"/>
    <property type="project" value="PomBase"/>
</dbReference>
<dbReference type="GO" id="GO:0005829">
    <property type="term" value="C:cytosol"/>
    <property type="evidence" value="ECO:0007005"/>
    <property type="project" value="PomBase"/>
</dbReference>
<dbReference type="GO" id="GO:0005634">
    <property type="term" value="C:nucleus"/>
    <property type="evidence" value="ECO:0007005"/>
    <property type="project" value="PomBase"/>
</dbReference>
<dbReference type="GO" id="GO:0000976">
    <property type="term" value="F:transcription cis-regulatory region binding"/>
    <property type="evidence" value="ECO:0000318"/>
    <property type="project" value="GO_Central"/>
</dbReference>
<dbReference type="GO" id="GO:0061659">
    <property type="term" value="F:ubiquitin-like protein ligase activity"/>
    <property type="evidence" value="ECO:0000255"/>
    <property type="project" value="PomBase"/>
</dbReference>
<dbReference type="GO" id="GO:0008270">
    <property type="term" value="F:zinc ion binding"/>
    <property type="evidence" value="ECO:0007669"/>
    <property type="project" value="UniProtKB-KW"/>
</dbReference>
<dbReference type="GO" id="GO:0045944">
    <property type="term" value="P:positive regulation of transcription by RNA polymerase II"/>
    <property type="evidence" value="ECO:0000318"/>
    <property type="project" value="GO_Central"/>
</dbReference>
<dbReference type="Gene3D" id="3.30.40.10">
    <property type="entry name" value="Zinc/RING finger domain, C3HC4 (zinc finger)"/>
    <property type="match status" value="1"/>
</dbReference>
<dbReference type="InterPro" id="IPR039739">
    <property type="entry name" value="MAG2/RNF10"/>
</dbReference>
<dbReference type="InterPro" id="IPR018957">
    <property type="entry name" value="Znf_C3HC4_RING-type"/>
</dbReference>
<dbReference type="InterPro" id="IPR001841">
    <property type="entry name" value="Znf_RING"/>
</dbReference>
<dbReference type="InterPro" id="IPR013083">
    <property type="entry name" value="Znf_RING/FYVE/PHD"/>
</dbReference>
<dbReference type="InterPro" id="IPR017907">
    <property type="entry name" value="Znf_RING_CS"/>
</dbReference>
<dbReference type="PANTHER" id="PTHR12983:SF9">
    <property type="entry name" value="E3 UBIQUITIN-PROTEIN LIGASE RNF10"/>
    <property type="match status" value="1"/>
</dbReference>
<dbReference type="PANTHER" id="PTHR12983">
    <property type="entry name" value="RING FINGER 10 FAMILY MEMBER"/>
    <property type="match status" value="1"/>
</dbReference>
<dbReference type="Pfam" id="PF00097">
    <property type="entry name" value="zf-C3HC4"/>
    <property type="match status" value="1"/>
</dbReference>
<dbReference type="SMART" id="SM00184">
    <property type="entry name" value="RING"/>
    <property type="match status" value="1"/>
</dbReference>
<dbReference type="SUPFAM" id="SSF57850">
    <property type="entry name" value="RING/U-box"/>
    <property type="match status" value="1"/>
</dbReference>
<dbReference type="PROSITE" id="PS00518">
    <property type="entry name" value="ZF_RING_1"/>
    <property type="match status" value="1"/>
</dbReference>
<dbReference type="PROSITE" id="PS50089">
    <property type="entry name" value="ZF_RING_2"/>
    <property type="match status" value="1"/>
</dbReference>
<reference key="1">
    <citation type="journal article" date="2002" name="Nature">
        <title>The genome sequence of Schizosaccharomyces pombe.</title>
        <authorList>
            <person name="Wood V."/>
            <person name="Gwilliam R."/>
            <person name="Rajandream M.A."/>
            <person name="Lyne M.H."/>
            <person name="Lyne R."/>
            <person name="Stewart A."/>
            <person name="Sgouros J.G."/>
            <person name="Peat N."/>
            <person name="Hayles J."/>
            <person name="Baker S.G."/>
            <person name="Basham D."/>
            <person name="Bowman S."/>
            <person name="Brooks K."/>
            <person name="Brown D."/>
            <person name="Brown S."/>
            <person name="Chillingworth T."/>
            <person name="Churcher C.M."/>
            <person name="Collins M."/>
            <person name="Connor R."/>
            <person name="Cronin A."/>
            <person name="Davis P."/>
            <person name="Feltwell T."/>
            <person name="Fraser A."/>
            <person name="Gentles S."/>
            <person name="Goble A."/>
            <person name="Hamlin N."/>
            <person name="Harris D.E."/>
            <person name="Hidalgo J."/>
            <person name="Hodgson G."/>
            <person name="Holroyd S."/>
            <person name="Hornsby T."/>
            <person name="Howarth S."/>
            <person name="Huckle E.J."/>
            <person name="Hunt S."/>
            <person name="Jagels K."/>
            <person name="James K.D."/>
            <person name="Jones L."/>
            <person name="Jones M."/>
            <person name="Leather S."/>
            <person name="McDonald S."/>
            <person name="McLean J."/>
            <person name="Mooney P."/>
            <person name="Moule S."/>
            <person name="Mungall K.L."/>
            <person name="Murphy L.D."/>
            <person name="Niblett D."/>
            <person name="Odell C."/>
            <person name="Oliver K."/>
            <person name="O'Neil S."/>
            <person name="Pearson D."/>
            <person name="Quail M.A."/>
            <person name="Rabbinowitsch E."/>
            <person name="Rutherford K.M."/>
            <person name="Rutter S."/>
            <person name="Saunders D."/>
            <person name="Seeger K."/>
            <person name="Sharp S."/>
            <person name="Skelton J."/>
            <person name="Simmonds M.N."/>
            <person name="Squares R."/>
            <person name="Squares S."/>
            <person name="Stevens K."/>
            <person name="Taylor K."/>
            <person name="Taylor R.G."/>
            <person name="Tivey A."/>
            <person name="Walsh S.V."/>
            <person name="Warren T."/>
            <person name="Whitehead S."/>
            <person name="Woodward J.R."/>
            <person name="Volckaert G."/>
            <person name="Aert R."/>
            <person name="Robben J."/>
            <person name="Grymonprez B."/>
            <person name="Weltjens I."/>
            <person name="Vanstreels E."/>
            <person name="Rieger M."/>
            <person name="Schaefer M."/>
            <person name="Mueller-Auer S."/>
            <person name="Gabel C."/>
            <person name="Fuchs M."/>
            <person name="Duesterhoeft A."/>
            <person name="Fritzc C."/>
            <person name="Holzer E."/>
            <person name="Moestl D."/>
            <person name="Hilbert H."/>
            <person name="Borzym K."/>
            <person name="Langer I."/>
            <person name="Beck A."/>
            <person name="Lehrach H."/>
            <person name="Reinhardt R."/>
            <person name="Pohl T.M."/>
            <person name="Eger P."/>
            <person name="Zimmermann W."/>
            <person name="Wedler H."/>
            <person name="Wambutt R."/>
            <person name="Purnelle B."/>
            <person name="Goffeau A."/>
            <person name="Cadieu E."/>
            <person name="Dreano S."/>
            <person name="Gloux S."/>
            <person name="Lelaure V."/>
            <person name="Mottier S."/>
            <person name="Galibert F."/>
            <person name="Aves S.J."/>
            <person name="Xiang Z."/>
            <person name="Hunt C."/>
            <person name="Moore K."/>
            <person name="Hurst S.M."/>
            <person name="Lucas M."/>
            <person name="Rochet M."/>
            <person name="Gaillardin C."/>
            <person name="Tallada V.A."/>
            <person name="Garzon A."/>
            <person name="Thode G."/>
            <person name="Daga R.R."/>
            <person name="Cruzado L."/>
            <person name="Jimenez J."/>
            <person name="Sanchez M."/>
            <person name="del Rey F."/>
            <person name="Benito J."/>
            <person name="Dominguez A."/>
            <person name="Revuelta J.L."/>
            <person name="Moreno S."/>
            <person name="Armstrong J."/>
            <person name="Forsburg S.L."/>
            <person name="Cerutti L."/>
            <person name="Lowe T."/>
            <person name="McCombie W.R."/>
            <person name="Paulsen I."/>
            <person name="Potashkin J."/>
            <person name="Shpakovski G.V."/>
            <person name="Ussery D."/>
            <person name="Barrell B.G."/>
            <person name="Nurse P."/>
        </authorList>
    </citation>
    <scope>NUCLEOTIDE SEQUENCE [LARGE SCALE GENOMIC DNA]</scope>
    <source>
        <strain>972 / ATCC 24843</strain>
    </source>
</reference>
<reference key="2">
    <citation type="journal article" date="2000" name="Genes Cells">
        <title>Large-scale screening of intracellular protein localization in living fission yeast cells by the use of a GFP-fusion genomic DNA library.</title>
        <authorList>
            <person name="Ding D.-Q."/>
            <person name="Tomita Y."/>
            <person name="Yamamoto A."/>
            <person name="Chikashige Y."/>
            <person name="Haraguchi T."/>
            <person name="Hiraoka Y."/>
        </authorList>
    </citation>
    <scope>NUCLEOTIDE SEQUENCE [LARGE SCALE GENOMIC DNA] OF 33-159</scope>
    <scope>SUBCELLULAR LOCATION</scope>
    <source>
        <strain>ATCC 38364 / 968</strain>
    </source>
</reference>
<reference key="3">
    <citation type="journal article" date="2006" name="Nat. Biotechnol.">
        <title>ORFeome cloning and global analysis of protein localization in the fission yeast Schizosaccharomyces pombe.</title>
        <authorList>
            <person name="Matsuyama A."/>
            <person name="Arai R."/>
            <person name="Yashiroda Y."/>
            <person name="Shirai A."/>
            <person name="Kamata A."/>
            <person name="Sekido S."/>
            <person name="Kobayashi Y."/>
            <person name="Hashimoto A."/>
            <person name="Hamamoto M."/>
            <person name="Hiraoka Y."/>
            <person name="Horinouchi S."/>
            <person name="Yoshida M."/>
        </authorList>
    </citation>
    <scope>SUBCELLULAR LOCATION [LARGE SCALE ANALYSIS]</scope>
</reference>
<name>YORN_SCHPO</name>
<evidence type="ECO:0000255" key="1">
    <source>
        <dbReference type="PROSITE-ProRule" id="PRU00175"/>
    </source>
</evidence>
<evidence type="ECO:0000256" key="2">
    <source>
        <dbReference type="SAM" id="MobiDB-lite"/>
    </source>
</evidence>